<evidence type="ECO:0000250" key="1"/>
<evidence type="ECO:0000250" key="2">
    <source>
        <dbReference type="UniProtKB" id="P54939"/>
    </source>
</evidence>
<evidence type="ECO:0000250" key="3">
    <source>
        <dbReference type="UniProtKB" id="Q9Y490"/>
    </source>
</evidence>
<evidence type="ECO:0000255" key="4">
    <source>
        <dbReference type="PROSITE-ProRule" id="PRU00084"/>
    </source>
</evidence>
<evidence type="ECO:0000255" key="5">
    <source>
        <dbReference type="PROSITE-ProRule" id="PRU00292"/>
    </source>
</evidence>
<evidence type="ECO:0000269" key="6">
    <source>
    </source>
</evidence>
<evidence type="ECO:0000269" key="7">
    <source>
    </source>
</evidence>
<evidence type="ECO:0000269" key="8">
    <source>
    </source>
</evidence>
<evidence type="ECO:0000269" key="9">
    <source>
    </source>
</evidence>
<evidence type="ECO:0000269" key="10">
    <source>
    </source>
</evidence>
<evidence type="ECO:0000269" key="11">
    <source>
    </source>
</evidence>
<evidence type="ECO:0000269" key="12">
    <source>
    </source>
</evidence>
<evidence type="ECO:0000269" key="13">
    <source>
    </source>
</evidence>
<evidence type="ECO:0000269" key="14">
    <source>
    </source>
</evidence>
<evidence type="ECO:0000305" key="15"/>
<evidence type="ECO:0000305" key="16">
    <source>
    </source>
</evidence>
<evidence type="ECO:0000305" key="17">
    <source>
    </source>
</evidence>
<evidence type="ECO:0007744" key="18">
    <source>
        <dbReference type="PDB" id="2L10"/>
    </source>
</evidence>
<evidence type="ECO:0007744" key="19">
    <source>
        <dbReference type="PDB" id="2L7A"/>
    </source>
</evidence>
<evidence type="ECO:0007744" key="20">
    <source>
        <dbReference type="PDB" id="2L7N"/>
    </source>
</evidence>
<evidence type="ECO:0007744" key="21">
    <source>
        <dbReference type="PDB" id="2LQG"/>
    </source>
</evidence>
<evidence type="ECO:0007744" key="22">
    <source>
    </source>
</evidence>
<evidence type="ECO:0007744" key="23">
    <source>
    </source>
</evidence>
<evidence type="ECO:0007744" key="24">
    <source>
    </source>
</evidence>
<evidence type="ECO:0007744" key="25">
    <source>
    </source>
</evidence>
<evidence type="ECO:0007829" key="26">
    <source>
        <dbReference type="PDB" id="1SJ7"/>
    </source>
</evidence>
<evidence type="ECO:0007829" key="27">
    <source>
        <dbReference type="PDB" id="1SJ8"/>
    </source>
</evidence>
<evidence type="ECO:0007829" key="28">
    <source>
        <dbReference type="PDB" id="1T01"/>
    </source>
</evidence>
<evidence type="ECO:0007829" key="29">
    <source>
        <dbReference type="PDB" id="1U89"/>
    </source>
</evidence>
<evidence type="ECO:0007829" key="30">
    <source>
        <dbReference type="PDB" id="2B0H"/>
    </source>
</evidence>
<evidence type="ECO:0007829" key="31">
    <source>
        <dbReference type="PDB" id="2JSW"/>
    </source>
</evidence>
<evidence type="ECO:0007829" key="32">
    <source>
        <dbReference type="PDB" id="2KC1"/>
    </source>
</evidence>
<evidence type="ECO:0007829" key="33">
    <source>
        <dbReference type="PDB" id="2KC2"/>
    </source>
</evidence>
<evidence type="ECO:0007829" key="34">
    <source>
        <dbReference type="PDB" id="2KMA"/>
    </source>
</evidence>
<evidence type="ECO:0007829" key="35">
    <source>
        <dbReference type="PDB" id="2KVP"/>
    </source>
</evidence>
<evidence type="ECO:0007829" key="36">
    <source>
        <dbReference type="PDB" id="2L10"/>
    </source>
</evidence>
<evidence type="ECO:0007829" key="37">
    <source>
        <dbReference type="PDB" id="2L7A"/>
    </source>
</evidence>
<evidence type="ECO:0007829" key="38">
    <source>
        <dbReference type="PDB" id="2L7N"/>
    </source>
</evidence>
<evidence type="ECO:0007829" key="39">
    <source>
        <dbReference type="PDB" id="2LQG"/>
    </source>
</evidence>
<evidence type="ECO:0007829" key="40">
    <source>
        <dbReference type="PDB" id="2QDQ"/>
    </source>
</evidence>
<evidence type="ECO:0007829" key="41">
    <source>
        <dbReference type="PDB" id="3DYJ"/>
    </source>
</evidence>
<evidence type="ECO:0007829" key="42">
    <source>
        <dbReference type="PDB" id="3IVF"/>
    </source>
</evidence>
<evidence type="ECO:0007829" key="43">
    <source>
        <dbReference type="PDB" id="4W8P"/>
    </source>
</evidence>
<evidence type="ECO:0007829" key="44">
    <source>
        <dbReference type="PDB" id="5IC0"/>
    </source>
</evidence>
<evidence type="ECO:0007829" key="45">
    <source>
        <dbReference type="PDB" id="5IC1"/>
    </source>
</evidence>
<evidence type="ECO:0007829" key="46">
    <source>
        <dbReference type="PDB" id="6BA6"/>
    </source>
</evidence>
<evidence type="ECO:0007829" key="47">
    <source>
        <dbReference type="PDB" id="6VGU"/>
    </source>
</evidence>
<name>TLN1_MOUSE</name>
<sequence>MVALSLKISIGNVVKTMQFEPSTMVYDACRMIRERIPEALAGPPNDFGLFLSDDDPKKGIWLEAGKALDYYMLRNGDTMEYRKKQRPLKIRMLDGTVKTIMVDDSKTVTDMLMTICARIGITNHDEYSLVRELMEEKKDEGTGTLRKDKTLLRDEKKMEKLKQKLHTDDELNWLDHGRTLREQGVEEHETLLLRRKFFYSDQNVDSRDPVQLNLLYVQARDDILNGSHPVSFDKACEFAGFQCQIQFGPHNEQKHKAGFLDLKDFLPKEYVKQKGERKIFQAHKNCGQMSEIEAKVRYVKLARSLKTYGVSFFLVKEKMKGKNKLVPRLLGITKECVMRVDEKTKEVIQEWSLTNIKRWAASPKSFTLDFGDYQDGYYSVQTTEGEQIAQLIAGYIDIILKKKKSKDHFGLEGDEESTMLEDSVSPKKSTVLQQQYNRVGKVEHGSVALPAIMRSGASGPENFQVGSMPPAQQQITSGQMHRGHMPPLTSAQQALTGTINSSMQAVQAAQATLDDFETLPPLGQDAASKAWRKNKMDESKHEIHSQVDAITAGTASVVNLTAGDPAETDYTAVGCAVTTISSNLTEMSRGVKLLAALLEDEGGNGRPLLQAAKGLAGAVSELLRSAQPASAEPRQNLLQAAGNVGQASGELLQQIGESDTDPHFQDVLMQLAKAVASAAAALVLKAKSVAQRTEDSGLQTQVIAAATQCALSTSQLVACTKVVAPTISSPVCQEQLVEAGRLVAKAVEGCVSASQAATEDGQLLRGVGAAATAVTQALNELLQHVKAHATGAGPAGRYDQATDTILTVTENIFSSMGDAGEMVRQARILAQATSDLVNAIKADAEGESDLENSRKLLSAAKILADATAKMVEAAKGAAAHPDSEEQQQRLREAAEGLRMATNAAAQNAIKKKLVQRLEHAAKQAAASATQTIAAAQHAASAPKASAGPQPLLVQSCKAVAEQIPLLVQGVRGSQAQPDSPSAQLALIAASQSFLQPGGKMVAAAKASVPTIQDQASAMQLSQCAKNLGTALAELRTAAQKAQEACGPLEMDSALSVVQNLEKDLQEIKAAARDGKLKPLPGETMEKCTQDLGNSTKAVSSAIAKLLGEIAQGNENYAGIAARDVAGGLRSLAQAARGVAALTSDPAVQAIVLDTASDVLDKASSLIEEAKKASGHPGDPESQQRLAQVAKAVTQALNRCVSCLPGQRDVDNALRAVGDASKRLLSDSLPPSTGTFQEAQSRLNEAAAGLNQAATELVQASRGTPQDLARASGRFGQDFSTFLEAGVEMAGQAPSQEDRAQVVSNLKGISMSSSKLLLAAKALSTDPASPNLKSQLAAAARAVTDSINQLITMCTQQAPGQKECDNALRQLETVRELLENPVQPINDMSYFGCLDSVMENSKVLGEAMTGISQNAKNGNLPEFGDAIATASKALCGFTEAAAQAAYLVGVSDPNSQAGQQGLVEPTQFARANQAIQMACQSLGEPGCTQAQVLSAATIVAKHTSALCNSCRLASARTANPTAKRQFVQSAKEVANSTANLVKTIKALDGDFTEENRAQCRAATAPLLEAVDNLSAFASNPEFSSVPAQISPEGRAAMEPIVISAKTMLESAGGLIQTARALAVNPRDPPRWSVLAGHSRTVSDSIKKLITSMRDKAPGQLECETAIAALNSCLRDLDQASLAAVSQQLAPREGISQEALHTQMLTAVQEISHLIEPLASAARAEASQLGHKVSQMAQYFEPLTLAAVGAASKTLSHPQQMALLDQTKTLAESALQLLYTAKEAGGNPKQAAHTQEALEEAVQMMTEAVEDLTTTLNEAASAAGVVGGMVDSITQAINQLDEGPMGDPEGSFVDYQTTMVRTAKAIAVTVQEMVTKSNTSPEELGPLANQLTSDYGRLASQAKPAAVAAENEEIGAHIKHRVQELGHGCSALVTKAGALQCSPSDVYTKKELIECARRVSEKVSHVLAALQAGNRGTQACITAASAVSGIIADLDTTIMFATAGTLNREGAETFADHREGILKTAKVLVEDTKVLVQNAAGSQEKLAQAAQSSVATITRLADVVKLGAASLGAEDPETQVVLINAVKDVAKALGDLISATKAAAGKVGDDPAVWQLKNSAKVMVTNVTSLLKTVKAVEDEATKGTRALEATTEHIRQELAVFCSPEPPAKTSTPEDFIRMTKGITMATAKAVAAGNSCRQEDVIATANLSRRAIADMLRACKEAAFHPEVAPDVRLRALHYGRECANGYLELLDHVLLTLQKPNPDLKQQLTGHSKRVAGSVTELIQAAEAMKGTEWVDPEDPTVIAENELLGAAAAIEAAAKKLEQLKPRAKPKEADESLNFEEQILEAAKSIAAATSALVKAASAAQRELVAQGKVGAIPANALDDGQWSQGLISAARMVAAATNNLCEAANAAVQGHASQEKLISSAKQVAASTAQLLVACKVKADQDSEAMKRLQAAGNAVKRASDNLVKAAQKAAAFEDQENETVVVKEKMVGGIAQIIAAQEEMLRKERELEEARKKLAQIRQQQYKFLPSELRDEH</sequence>
<accession>P26039</accession>
<accession>A2AIM8</accession>
<accession>Q8VEF0</accession>
<proteinExistence type="evidence at protein level"/>
<gene>
    <name type="primary">Tln1</name>
    <name type="synonym">Tln</name>
</gene>
<keyword id="KW-0002">3D-structure</keyword>
<keyword id="KW-0007">Acetylation</keyword>
<keyword id="KW-0965">Cell junction</keyword>
<keyword id="KW-1003">Cell membrane</keyword>
<keyword id="KW-0966">Cell projection</keyword>
<keyword id="KW-0963">Cytoplasm</keyword>
<keyword id="KW-0206">Cytoskeleton</keyword>
<keyword id="KW-0472">Membrane</keyword>
<keyword id="KW-0597">Phosphoprotein</keyword>
<keyword id="KW-1185">Reference proteome</keyword>
<protein>
    <recommendedName>
        <fullName>Talin-1</fullName>
    </recommendedName>
</protein>
<organism>
    <name type="scientific">Mus musculus</name>
    <name type="common">Mouse</name>
    <dbReference type="NCBI Taxonomy" id="10090"/>
    <lineage>
        <taxon>Eukaryota</taxon>
        <taxon>Metazoa</taxon>
        <taxon>Chordata</taxon>
        <taxon>Craniata</taxon>
        <taxon>Vertebrata</taxon>
        <taxon>Euteleostomi</taxon>
        <taxon>Mammalia</taxon>
        <taxon>Eutheria</taxon>
        <taxon>Euarchontoglires</taxon>
        <taxon>Glires</taxon>
        <taxon>Rodentia</taxon>
        <taxon>Myomorpha</taxon>
        <taxon>Muroidea</taxon>
        <taxon>Muridae</taxon>
        <taxon>Murinae</taxon>
        <taxon>Mus</taxon>
        <taxon>Mus</taxon>
    </lineage>
</organism>
<reference key="1">
    <citation type="journal article" date="1990" name="Nature">
        <title>Sequence and domain structure of talin.</title>
        <authorList>
            <person name="Rees D.J.G."/>
            <person name="Ades S.A."/>
            <person name="Singer S.J."/>
            <person name="Hynes R.O."/>
        </authorList>
    </citation>
    <scope>NUCLEOTIDE SEQUENCE [MRNA]</scope>
    <source>
        <strain>BALB/cJ</strain>
        <tissue>Fibroblast</tissue>
    </source>
</reference>
<reference key="2">
    <citation type="journal article" date="2009" name="PLoS Biol.">
        <title>Lineage-specific biology revealed by a finished genome assembly of the mouse.</title>
        <authorList>
            <person name="Church D.M."/>
            <person name="Goodstadt L."/>
            <person name="Hillier L.W."/>
            <person name="Zody M.C."/>
            <person name="Goldstein S."/>
            <person name="She X."/>
            <person name="Bult C.J."/>
            <person name="Agarwala R."/>
            <person name="Cherry J.L."/>
            <person name="DiCuccio M."/>
            <person name="Hlavina W."/>
            <person name="Kapustin Y."/>
            <person name="Meric P."/>
            <person name="Maglott D."/>
            <person name="Birtle Z."/>
            <person name="Marques A.C."/>
            <person name="Graves T."/>
            <person name="Zhou S."/>
            <person name="Teague B."/>
            <person name="Potamousis K."/>
            <person name="Churas C."/>
            <person name="Place M."/>
            <person name="Herschleb J."/>
            <person name="Runnheim R."/>
            <person name="Forrest D."/>
            <person name="Amos-Landgraf J."/>
            <person name="Schwartz D.C."/>
            <person name="Cheng Z."/>
            <person name="Lindblad-Toh K."/>
            <person name="Eichler E.E."/>
            <person name="Ponting C.P."/>
        </authorList>
    </citation>
    <scope>NUCLEOTIDE SEQUENCE [LARGE SCALE GENOMIC DNA]</scope>
    <source>
        <strain>C57BL/6J</strain>
    </source>
</reference>
<reference key="3">
    <citation type="journal article" date="2004" name="Genome Res.">
        <title>The status, quality, and expansion of the NIH full-length cDNA project: the Mammalian Gene Collection (MGC).</title>
        <authorList>
            <consortium name="The MGC Project Team"/>
        </authorList>
    </citation>
    <scope>NUCLEOTIDE SEQUENCE [LARGE SCALE MRNA]</scope>
    <source>
        <tissue>Mammary gland</tissue>
    </source>
</reference>
<reference key="4">
    <citation type="journal article" date="1995" name="J. Biol. Chem.">
        <title>Interaction of focal adhesion kinase with cytoskeletal protein talin.</title>
        <authorList>
            <person name="Chen H.C."/>
            <person name="Appeddu P.A."/>
            <person name="Parsons J.T."/>
            <person name="Hildebrand J.D."/>
            <person name="Schaller M.D."/>
            <person name="Guan J.L."/>
        </authorList>
    </citation>
    <scope>INTERACTION WITH PTK2</scope>
</reference>
<reference key="5">
    <citation type="journal article" date="2005" name="Nat. Biotechnol.">
        <title>Immunoaffinity profiling of tyrosine phosphorylation in cancer cells.</title>
        <authorList>
            <person name="Rush J."/>
            <person name="Moritz A."/>
            <person name="Lee K.A."/>
            <person name="Guo A."/>
            <person name="Goss V.L."/>
            <person name="Spek E.J."/>
            <person name="Zhang H."/>
            <person name="Zha X.-M."/>
            <person name="Polakiewicz R.D."/>
            <person name="Comb M.J."/>
        </authorList>
    </citation>
    <scope>PHOSPHORYLATION [LARGE SCALE ANALYSIS] AT TYR-1116</scope>
    <scope>IDENTIFICATION BY MASS SPECTROMETRY [LARGE SCALE ANALYSIS]</scope>
</reference>
<reference key="6">
    <citation type="journal article" date="2008" name="J. Proteome Res.">
        <title>Large-scale identification and evolution indexing of tyrosine phosphorylation sites from murine brain.</title>
        <authorList>
            <person name="Ballif B.A."/>
            <person name="Carey G.R."/>
            <person name="Sunyaev S.R."/>
            <person name="Gygi S.P."/>
        </authorList>
    </citation>
    <scope>PHOSPHORYLATION [LARGE SCALE ANALYSIS] AT TYR-1116</scope>
    <scope>IDENTIFICATION BY MASS SPECTROMETRY [LARGE SCALE ANALYSIS]</scope>
    <source>
        <tissue>Brain</tissue>
    </source>
</reference>
<reference key="7">
    <citation type="journal article" date="2008" name="J. Proteome Res.">
        <title>Specific phosphopeptide enrichment with immobilized titanium ion affinity chromatography adsorbent for phosphoproteome analysis.</title>
        <authorList>
            <person name="Zhou H."/>
            <person name="Ye M."/>
            <person name="Dong J."/>
            <person name="Han G."/>
            <person name="Jiang X."/>
            <person name="Wu R."/>
            <person name="Zou H."/>
        </authorList>
    </citation>
    <scope>IDENTIFICATION BY MASS SPECTROMETRY [LARGE SCALE ANALYSIS]</scope>
    <source>
        <tissue>Liver</tissue>
    </source>
</reference>
<reference key="8">
    <citation type="journal article" date="2010" name="Cell">
        <title>A tissue-specific atlas of mouse protein phosphorylation and expression.</title>
        <authorList>
            <person name="Huttlin E.L."/>
            <person name="Jedrychowski M.P."/>
            <person name="Elias J.E."/>
            <person name="Goswami T."/>
            <person name="Rad R."/>
            <person name="Beausoleil S.A."/>
            <person name="Villen J."/>
            <person name="Haas W."/>
            <person name="Sowa M.E."/>
            <person name="Gygi S.P."/>
        </authorList>
    </citation>
    <scope>PHOSPHORYLATION [LARGE SCALE ANALYSIS] AT SER-425; SER-446; SER-620; SER-729; SER-1328; SER-1878 AND SER-2040</scope>
    <scope>IDENTIFICATION BY MASS SPECTROMETRY [LARGE SCALE ANALYSIS]</scope>
    <source>
        <tissue>Brain</tissue>
        <tissue>Brown adipose tissue</tissue>
        <tissue>Heart</tissue>
        <tissue>Kidney</tissue>
        <tissue>Liver</tissue>
        <tissue>Lung</tissue>
        <tissue>Pancreas</tissue>
        <tissue>Spleen</tissue>
        <tissue>Testis</tissue>
    </source>
</reference>
<reference key="9">
    <citation type="journal article" date="2011" name="J. Cell Biol.">
        <title>Osteoblast mineralization requires beta1 integrin/ICAP-1-dependent fibronectin deposition.</title>
        <authorList>
            <person name="Brunner M."/>
            <person name="Millon-Fremillon A."/>
            <person name="Chevalier G."/>
            <person name="Nakchbandi I.A."/>
            <person name="Mosher D."/>
            <person name="Block M.R."/>
            <person name="Albiges-Rizo C."/>
            <person name="Bouvard D."/>
        </authorList>
    </citation>
    <scope>SUBCELLULAR LOCATION</scope>
</reference>
<reference key="10">
    <citation type="journal article" date="2013" name="Mol. Cell">
        <title>SIRT5-mediated lysine desuccinylation impacts diverse metabolic pathways.</title>
        <authorList>
            <person name="Park J."/>
            <person name="Chen Y."/>
            <person name="Tishkoff D.X."/>
            <person name="Peng C."/>
            <person name="Tan M."/>
            <person name="Dai L."/>
            <person name="Xie Z."/>
            <person name="Zhang Y."/>
            <person name="Zwaans B.M."/>
            <person name="Skinner M.E."/>
            <person name="Lombard D.B."/>
            <person name="Zhao Y."/>
        </authorList>
    </citation>
    <scope>ACETYLATION [LARGE SCALE ANALYSIS] AT LYS-1544</scope>
    <scope>IDENTIFICATION BY MASS SPECTROMETRY [LARGE SCALE ANALYSIS]</scope>
    <source>
        <tissue>Embryonic fibroblast</tissue>
    </source>
</reference>
<reference key="11">
    <citation type="journal article" date="2016" name="Elife">
        <title>Talin-KANK1 interaction controls the recruitment of cortical microtubule stabilizing complexes to focal adhesions.</title>
        <authorList>
            <person name="Bouchet B.P."/>
            <person name="Gough R.E."/>
            <person name="Ammon Y.C."/>
            <person name="van de Willige D."/>
            <person name="Post H."/>
            <person name="Jacquemet G."/>
            <person name="Altelaar A.M."/>
            <person name="Heck A.J."/>
            <person name="Goult B.T."/>
            <person name="Akhmanova A."/>
        </authorList>
    </citation>
    <scope>FUNCTION</scope>
    <scope>SUBCELLULAR LOCATION</scope>
    <scope>INTERACTION WITH KANK1</scope>
    <scope>REGION</scope>
    <scope>MUTAGENESIS OF GLY-1404; TRP-1630 AND SER-1641</scope>
</reference>
<reference key="12">
    <citation type="journal article" date="2023" name="Nat. Commun.">
        <title>SVEP1 is an endogenous ligand for the orphan receptor PEAR1.</title>
        <authorList>
            <person name="Elenbaas J.S."/>
            <person name="Pudupakkam U."/>
            <person name="Ashworth K.J."/>
            <person name="Kang C.J."/>
            <person name="Patel V."/>
            <person name="Santana K."/>
            <person name="Jung I.H."/>
            <person name="Lee P.C."/>
            <person name="Burks K.H."/>
            <person name="Amrute J.M."/>
            <person name="Mecham R.P."/>
            <person name="Halabi C.M."/>
            <person name="Alisio A."/>
            <person name="Di Paola J."/>
            <person name="Stitziel N.O."/>
        </authorList>
    </citation>
    <scope>INTERACTION WITH SVEP1</scope>
</reference>
<reference key="13">
    <citation type="journal article" date="2004" name="EMBO J.">
        <title>Activation of a vinculin-binding site in the talin rod involves rearrangement of a five-helix bundle.</title>
        <authorList>
            <person name="Papagrigoriou E."/>
            <person name="Gingras A.R."/>
            <person name="Barsukov I.L."/>
            <person name="Bate N."/>
            <person name="Fillingham I.J."/>
            <person name="Patel B."/>
            <person name="Frank R."/>
            <person name="Ziegler W.H."/>
            <person name="Roberts G.C.K."/>
            <person name="Critchley D.R."/>
            <person name="Emsley J."/>
        </authorList>
    </citation>
    <scope>X-RAY CRYSTALLOGRAPHY (2.5 ANGSTROMS) OF 482-789 IN COMPLEX WITH VCL</scope>
    <scope>DOMAIN</scope>
</reference>
<reference key="14">
    <citation type="journal article" date="2005" name="J. Biol. Chem.">
        <title>Structural basis for phosphatidylinositol phosphate kinase type Igamma binding to talin at focal adhesions.</title>
        <authorList>
            <person name="de Pereda J.M."/>
            <person name="Wegener K.L."/>
            <person name="Santelli E."/>
            <person name="Bate N."/>
            <person name="Ginsberg M.H."/>
            <person name="Critchley D.R."/>
            <person name="Campbell I.D."/>
            <person name="Liddington R.C."/>
        </authorList>
    </citation>
    <scope>X-RAY CRYSTALLOGRAPHY (2.6 ANGSTROMS) OF 209-410 IN COMPLEX WITH PIP5K1C</scope>
</reference>
<reference key="15">
    <citation type="journal article" date="2005" name="Structure">
        <title>A vinculin binding domain from the talin rod unfolds to form a complex with the vinculin head.</title>
        <authorList>
            <person name="Fillingham I."/>
            <person name="Gingras A.R."/>
            <person name="Papagrigoriou E."/>
            <person name="Patel B."/>
            <person name="Emsley J."/>
            <person name="Critchley D.R."/>
            <person name="Roberts G.C.K."/>
            <person name="Barsukov I.L."/>
        </authorList>
    </citation>
    <scope>STRUCTURE BY NMR OF 755-889</scope>
    <scope>INTERACTION WITH VCL</scope>
</reference>
<reference key="16">
    <citation type="journal article" date="2010" name="J. Biol. Chem.">
        <title>Central region of talin has a unique fold that binds vinculin and actin.</title>
        <authorList>
            <person name="Gingras A.R."/>
            <person name="Bate N."/>
            <person name="Goult B.T."/>
            <person name="Patel B."/>
            <person name="Kopp P.M."/>
            <person name="Emsley J."/>
            <person name="Barsukov I.L."/>
            <person name="Roberts G.C."/>
            <person name="Critchley D.R."/>
        </authorList>
    </citation>
    <scope>X-RAY CRYSTALLOGRAPHY (2.00 ANGSTROMS) OF 1359-1659</scope>
    <scope>INTERACTION WITH F-ACTIN AND VCL</scope>
</reference>
<reference evidence="18 19 20 21" key="17">
    <citation type="journal article" date="2013" name="J. Biol. Chem.">
        <title>RIAM and vinculin binding to talin are mutually exclusive and regulate adhesion assembly and turnover.</title>
        <authorList>
            <person name="Goult B.T."/>
            <person name="Zacharchenko T."/>
            <person name="Bate N."/>
            <person name="Tsang R."/>
            <person name="Hey F."/>
            <person name="Gingras A.R."/>
            <person name="Elliott P.R."/>
            <person name="Roberts G.C."/>
            <person name="Ballestrem C."/>
            <person name="Critchley D.R."/>
            <person name="Barsukov I.L."/>
        </authorList>
    </citation>
    <scope>STRUCTURE BY NMR OF 737-1357</scope>
    <scope>INTERACTION WITH APBB1IP AND VCL</scope>
    <scope>DOMAIN</scope>
    <scope>MUTAGENESIS OF THR-809; THR-833; THR-867 AND THR-901</scope>
</reference>
<feature type="chain" id="PRO_0000219429" description="Talin-1">
    <location>
        <begin position="1"/>
        <end position="2541"/>
    </location>
</feature>
<feature type="domain" description="FERM" evidence="4">
    <location>
        <begin position="86"/>
        <end position="403"/>
    </location>
</feature>
<feature type="domain" description="I/LWEQ" evidence="5">
    <location>
        <begin position="2293"/>
        <end position="2533"/>
    </location>
</feature>
<feature type="region of interest" description="Interaction with LAYN" evidence="2">
    <location>
        <begin position="280"/>
        <end position="435"/>
    </location>
</feature>
<feature type="region of interest" description="Helical bundle R1" evidence="17">
    <location>
        <begin position="482"/>
        <end position="655"/>
    </location>
</feature>
<feature type="region of interest" description="Helical bundle R2" evidence="17">
    <location>
        <begin position="656"/>
        <end position="786"/>
    </location>
</feature>
<feature type="region of interest" description="Helical bundle R3" evidence="17">
    <location>
        <begin position="787"/>
        <end position="911"/>
    </location>
</feature>
<feature type="region of interest" description="Helical bundle R4" evidence="17">
    <location>
        <begin position="913"/>
        <end position="1044"/>
    </location>
</feature>
<feature type="region of interest" description="Helical bundle R5" evidence="17">
    <location>
        <begin position="1046"/>
        <end position="1206"/>
    </location>
</feature>
<feature type="region of interest" description="Helical bundle R6" evidence="17">
    <location>
        <begin position="1207"/>
        <end position="1357"/>
    </location>
</feature>
<feature type="region of interest" description="Interaction with SYNM" evidence="2">
    <location>
        <begin position="1327"/>
        <end position="1948"/>
    </location>
</feature>
<feature type="region of interest" description="Helical bundle R7A; Interaction with KANK1" evidence="12 17">
    <location>
        <begin position="1358"/>
        <end position="1453"/>
    </location>
</feature>
<feature type="region of interest" description="Interaction with VCL and F-actin" evidence="9">
    <location>
        <begin position="1359"/>
        <end position="1659"/>
    </location>
</feature>
<feature type="region of interest" description="Helical bundle R8" evidence="17">
    <location>
        <begin position="1461"/>
        <end position="1580"/>
    </location>
</feature>
<feature type="region of interest" description="Helical bundle R7B; Interaction with KANK1" evidence="12 17">
    <location>
        <begin position="1581"/>
        <end position="1653"/>
    </location>
</feature>
<feature type="region of interest" description="Helical bundle R9" evidence="17">
    <location>
        <begin position="1655"/>
        <end position="1822"/>
    </location>
</feature>
<feature type="region of interest" description="Helical bundle R10" evidence="17">
    <location>
        <begin position="1823"/>
        <end position="1973"/>
    </location>
</feature>
<feature type="region of interest" description="Helical bundle R11" evidence="17">
    <location>
        <begin position="1974"/>
        <end position="2140"/>
    </location>
</feature>
<feature type="region of interest" description="Helical bundle R12" evidence="17">
    <location>
        <begin position="2141"/>
        <end position="2294"/>
    </location>
</feature>
<feature type="region of interest" description="Helical bundle R13" evidence="17">
    <location>
        <begin position="2300"/>
        <end position="2482"/>
    </location>
</feature>
<feature type="modified residue" description="Phosphothreonine" evidence="3">
    <location>
        <position position="167"/>
    </location>
</feature>
<feature type="modified residue" description="Phosphoserine" evidence="3">
    <location>
        <position position="405"/>
    </location>
</feature>
<feature type="modified residue" description="Phosphoserine" evidence="24">
    <location>
        <position position="425"/>
    </location>
</feature>
<feature type="modified residue" description="Phosphoserine" evidence="24">
    <location>
        <position position="446"/>
    </location>
</feature>
<feature type="modified residue" description="Phosphoserine" evidence="24">
    <location>
        <position position="620"/>
    </location>
</feature>
<feature type="modified residue" description="Phosphoserine" evidence="24">
    <location>
        <position position="729"/>
    </location>
</feature>
<feature type="modified residue" description="Phosphoserine" evidence="3">
    <location>
        <position position="1021"/>
    </location>
</feature>
<feature type="modified residue" description="Phosphotyrosine" evidence="22 23">
    <location>
        <position position="1116"/>
    </location>
</feature>
<feature type="modified residue" description="Phosphothreonine" evidence="3">
    <location>
        <position position="1142"/>
    </location>
</feature>
<feature type="modified residue" description="Phosphoserine" evidence="3">
    <location>
        <position position="1201"/>
    </location>
</feature>
<feature type="modified residue" description="Phosphoserine" evidence="3">
    <location>
        <position position="1225"/>
    </location>
</feature>
<feature type="modified residue" description="Phosphothreonine" evidence="3">
    <location>
        <position position="1263"/>
    </location>
</feature>
<feature type="modified residue" description="Phosphoserine" evidence="3">
    <location>
        <position position="1323"/>
    </location>
</feature>
<feature type="modified residue" description="Phosphoserine" evidence="24">
    <location>
        <position position="1328"/>
    </location>
</feature>
<feature type="modified residue" description="N6-acetyllysine" evidence="25">
    <location>
        <position position="1544"/>
    </location>
</feature>
<feature type="modified residue" description="Phosphoserine" evidence="3">
    <location>
        <position position="1849"/>
    </location>
</feature>
<feature type="modified residue" description="Phosphothreonine" evidence="3">
    <location>
        <position position="1855"/>
    </location>
</feature>
<feature type="modified residue" description="Phosphoserine" evidence="24">
    <location>
        <position position="1878"/>
    </location>
</feature>
<feature type="modified residue" description="N6-acetyllysine" evidence="3">
    <location>
        <position position="2031"/>
    </location>
</feature>
<feature type="modified residue" description="Phosphoserine" evidence="24">
    <location>
        <position position="2040"/>
    </location>
</feature>
<feature type="modified residue" description="N6-acetyllysine" evidence="3">
    <location>
        <position position="2115"/>
    </location>
</feature>
<feature type="sequence variant">
    <original>L</original>
    <variation>P</variation>
    <location>
        <position position="1105"/>
    </location>
</feature>
<feature type="sequence variant">
    <original>K</original>
    <variation>M</variation>
    <location>
        <position position="2180"/>
    </location>
</feature>
<feature type="mutagenesis site" description="Reduces stability and binding to VCL with little effect on binding to APBB1IP; when associated with V-833; V-867 and I-901." evidence="11">
    <original>T</original>
    <variation>I</variation>
    <location>
        <position position="809"/>
    </location>
</feature>
<feature type="mutagenesis site" description="Reduces stability and binding to VCL with little effect on binding to APBB1IP; when associated with I-809; V-867 and I-901." evidence="11">
    <original>T</original>
    <variation>V</variation>
    <location>
        <position position="833"/>
    </location>
</feature>
<feature type="mutagenesis site" description="Reduces stability and binding to VCL with little effect on binding to APBB1IP; when associated with I-809; V-833 and I-901." evidence="11">
    <original>T</original>
    <variation>V</variation>
    <location>
        <position position="867"/>
    </location>
</feature>
<feature type="mutagenesis site" description="Reduces stability and binding to VCL with little effect on binding to APBB1IP; when associated with I-809; V-833 and V-867." evidence="11">
    <original>T</original>
    <variation>I</variation>
    <location>
        <position position="901"/>
    </location>
</feature>
<feature type="mutagenesis site" description="Does not affect focal adhesion (FA) formation, cell adhesion and spreading. Impairs the interaction with KANK1 and abrogates KANK1 association with FAs. Interferes with CMSCs clustering and causes microtubule disorganization in the vicinity of FAs." evidence="12">
    <original>G</original>
    <variation>L</variation>
    <location>
        <position position="1404"/>
    </location>
</feature>
<feature type="mutagenesis site" description="Impairs the interaction with KANK1." evidence="12">
    <original>W</original>
    <variation>A</variation>
    <location>
        <position position="1630"/>
    </location>
</feature>
<feature type="mutagenesis site" description="Does not significantly affect the interaction with KANK1." evidence="12">
    <original>S</original>
    <variation>E</variation>
    <location>
        <position position="1641"/>
    </location>
</feature>
<feature type="sequence conflict" description="In Ref. 1; CAA39588." evidence="15" ref="1">
    <original>K</original>
    <variation>N</variation>
    <location>
        <position position="673"/>
    </location>
</feature>
<feature type="sequence conflict" description="In Ref. 1; CAA39588." evidence="15" ref="1">
    <original>S</original>
    <variation>L</variation>
    <location>
        <position position="1227"/>
    </location>
</feature>
<feature type="strand" evidence="42">
    <location>
        <begin position="4"/>
        <end position="10"/>
    </location>
</feature>
<feature type="strand" evidence="42">
    <location>
        <begin position="13"/>
        <end position="19"/>
    </location>
</feature>
<feature type="helix" evidence="42">
    <location>
        <begin position="25"/>
        <end position="33"/>
    </location>
</feature>
<feature type="helix" evidence="42">
    <location>
        <begin position="37"/>
        <end position="40"/>
    </location>
</feature>
<feature type="helix" evidence="42">
    <location>
        <begin position="44"/>
        <end position="46"/>
    </location>
</feature>
<feature type="strand" evidence="42">
    <location>
        <begin position="47"/>
        <end position="51"/>
    </location>
</feature>
<feature type="helix" evidence="42">
    <location>
        <begin position="56"/>
        <end position="58"/>
    </location>
</feature>
<feature type="strand" evidence="32">
    <location>
        <begin position="60"/>
        <end position="62"/>
    </location>
</feature>
<feature type="strand" evidence="46">
    <location>
        <begin position="64"/>
        <end position="67"/>
    </location>
</feature>
<feature type="helix" evidence="42">
    <location>
        <begin position="68"/>
        <end position="71"/>
    </location>
</feature>
<feature type="strand" evidence="42">
    <location>
        <begin position="78"/>
        <end position="83"/>
    </location>
</feature>
<feature type="strand" evidence="42">
    <location>
        <begin position="85"/>
        <end position="91"/>
    </location>
</feature>
<feature type="strand" evidence="47">
    <location>
        <begin position="93"/>
        <end position="95"/>
    </location>
</feature>
<feature type="strand" evidence="42">
    <location>
        <begin position="97"/>
        <end position="103"/>
    </location>
</feature>
<feature type="helix" evidence="42">
    <location>
        <begin position="108"/>
        <end position="118"/>
    </location>
</feature>
<feature type="helix" evidence="42">
    <location>
        <begin position="124"/>
        <end position="126"/>
    </location>
</feature>
<feature type="strand" evidence="42">
    <location>
        <begin position="127"/>
        <end position="130"/>
    </location>
</feature>
<feature type="strand" evidence="34">
    <location>
        <begin position="136"/>
        <end position="138"/>
    </location>
</feature>
<feature type="strand" evidence="33">
    <location>
        <begin position="146"/>
        <end position="150"/>
    </location>
</feature>
<feature type="strand" evidence="33">
    <location>
        <begin position="168"/>
        <end position="174"/>
    </location>
</feature>
<feature type="strand" evidence="33">
    <location>
        <begin position="176"/>
        <end position="178"/>
    </location>
</feature>
<feature type="helix" evidence="42">
    <location>
        <begin position="181"/>
        <end position="183"/>
    </location>
</feature>
<feature type="strand" evidence="42">
    <location>
        <begin position="190"/>
        <end position="195"/>
    </location>
</feature>
<feature type="helix" evidence="42">
    <location>
        <begin position="209"/>
        <end position="224"/>
    </location>
</feature>
<feature type="strand" evidence="42">
    <location>
        <begin position="226"/>
        <end position="228"/>
    </location>
</feature>
<feature type="helix" evidence="42">
    <location>
        <begin position="232"/>
        <end position="247"/>
    </location>
</feature>
<feature type="turn" evidence="42">
    <location>
        <begin position="252"/>
        <end position="254"/>
    </location>
</feature>
<feature type="helix" evidence="42">
    <location>
        <begin position="262"/>
        <end position="264"/>
    </location>
</feature>
<feature type="helix" evidence="42">
    <location>
        <begin position="268"/>
        <end position="270"/>
    </location>
</feature>
<feature type="helix" evidence="42">
    <location>
        <begin position="275"/>
        <end position="285"/>
    </location>
</feature>
<feature type="turn" evidence="42">
    <location>
        <begin position="286"/>
        <end position="288"/>
    </location>
</feature>
<feature type="helix" evidence="42">
    <location>
        <begin position="291"/>
        <end position="304"/>
    </location>
</feature>
<feature type="turn" evidence="42">
    <location>
        <begin position="306"/>
        <end position="309"/>
    </location>
</feature>
<feature type="strand" evidence="42">
    <location>
        <begin position="311"/>
        <end position="318"/>
    </location>
</feature>
<feature type="strand" evidence="42">
    <location>
        <begin position="325"/>
        <end position="332"/>
    </location>
</feature>
<feature type="strand" evidence="42">
    <location>
        <begin position="334"/>
        <end position="341"/>
    </location>
</feature>
<feature type="turn" evidence="42">
    <location>
        <begin position="342"/>
        <end position="344"/>
    </location>
</feature>
<feature type="strand" evidence="42">
    <location>
        <begin position="347"/>
        <end position="352"/>
    </location>
</feature>
<feature type="helix" evidence="42">
    <location>
        <begin position="353"/>
        <end position="355"/>
    </location>
</feature>
<feature type="strand" evidence="42">
    <location>
        <begin position="358"/>
        <end position="362"/>
    </location>
</feature>
<feature type="strand" evidence="42">
    <location>
        <begin position="365"/>
        <end position="369"/>
    </location>
</feature>
<feature type="helix" evidence="42">
    <location>
        <begin position="371"/>
        <end position="373"/>
    </location>
</feature>
<feature type="strand" evidence="42">
    <location>
        <begin position="374"/>
        <end position="376"/>
    </location>
</feature>
<feature type="strand" evidence="42">
    <location>
        <begin position="378"/>
        <end position="381"/>
    </location>
</feature>
<feature type="helix" evidence="42">
    <location>
        <begin position="385"/>
        <end position="397"/>
    </location>
</feature>
<feature type="helix" evidence="26">
    <location>
        <begin position="493"/>
        <end position="512"/>
    </location>
</feature>
<feature type="helix" evidence="26">
    <location>
        <begin position="526"/>
        <end position="560"/>
    </location>
</feature>
<feature type="strand" evidence="26">
    <location>
        <begin position="565"/>
        <end position="567"/>
    </location>
</feature>
<feature type="helix" evidence="26">
    <location>
        <begin position="570"/>
        <end position="600"/>
    </location>
</feature>
<feature type="helix" evidence="28">
    <location>
        <begin position="606"/>
        <end position="626"/>
    </location>
</feature>
<feature type="helix" evidence="26">
    <location>
        <begin position="634"/>
        <end position="652"/>
    </location>
</feature>
<feature type="helix" evidence="27">
    <location>
        <begin position="664"/>
        <end position="690"/>
    </location>
</feature>
<feature type="strand" evidence="27">
    <location>
        <begin position="696"/>
        <end position="699"/>
    </location>
</feature>
<feature type="helix" evidence="27">
    <location>
        <begin position="700"/>
        <end position="723"/>
    </location>
</feature>
<feature type="turn" evidence="27">
    <location>
        <begin position="724"/>
        <end position="726"/>
    </location>
</feature>
<feature type="helix" evidence="27">
    <location>
        <begin position="730"/>
        <end position="756"/>
    </location>
</feature>
<feature type="helix" evidence="27">
    <location>
        <begin position="762"/>
        <end position="780"/>
    </location>
</feature>
<feature type="strand" evidence="37">
    <location>
        <begin position="787"/>
        <end position="790"/>
    </location>
</feature>
<feature type="strand" evidence="29">
    <location>
        <begin position="792"/>
        <end position="794"/>
    </location>
</feature>
<feature type="helix" evidence="29">
    <location>
        <begin position="799"/>
        <end position="814"/>
    </location>
</feature>
<feature type="turn" evidence="29">
    <location>
        <begin position="815"/>
        <end position="817"/>
    </location>
</feature>
<feature type="helix" evidence="29">
    <location>
        <begin position="820"/>
        <end position="843"/>
    </location>
</feature>
<feature type="helix" evidence="29">
    <location>
        <begin position="844"/>
        <end position="846"/>
    </location>
</feature>
<feature type="helix" evidence="29">
    <location>
        <begin position="850"/>
        <end position="876"/>
    </location>
</feature>
<feature type="strand" evidence="29">
    <location>
        <begin position="878"/>
        <end position="880"/>
    </location>
</feature>
<feature type="helix" evidence="37">
    <location>
        <begin position="884"/>
        <end position="907"/>
    </location>
</feature>
<feature type="helix" evidence="39">
    <location>
        <begin position="914"/>
        <end position="938"/>
    </location>
</feature>
<feature type="strand" evidence="39">
    <location>
        <begin position="943"/>
        <end position="946"/>
    </location>
</feature>
<feature type="helix" evidence="39">
    <location>
        <begin position="951"/>
        <end position="975"/>
    </location>
</feature>
<feature type="helix" evidence="39">
    <location>
        <begin position="980"/>
        <end position="1007"/>
    </location>
</feature>
<feature type="helix" evidence="39">
    <location>
        <begin position="1008"/>
        <end position="1010"/>
    </location>
</feature>
<feature type="helix" evidence="39">
    <location>
        <begin position="1014"/>
        <end position="1042"/>
    </location>
</feature>
<feature type="helix" evidence="38">
    <location>
        <begin position="1049"/>
        <end position="1073"/>
    </location>
</feature>
<feature type="helix" evidence="38">
    <location>
        <begin position="1084"/>
        <end position="1105"/>
    </location>
</feature>
<feature type="helix" evidence="38">
    <location>
        <begin position="1115"/>
        <end position="1141"/>
    </location>
</feature>
<feature type="helix" evidence="38">
    <location>
        <begin position="1147"/>
        <end position="1172"/>
    </location>
</feature>
<feature type="strand" evidence="38">
    <location>
        <begin position="1174"/>
        <end position="1177"/>
    </location>
</feature>
<feature type="helix" evidence="38">
    <location>
        <begin position="1179"/>
        <end position="1201"/>
    </location>
</feature>
<feature type="helix" evidence="36">
    <location>
        <begin position="1207"/>
        <end position="1223"/>
    </location>
</feature>
<feature type="turn" evidence="36">
    <location>
        <begin position="1224"/>
        <end position="1226"/>
    </location>
</feature>
<feature type="helix" evidence="36">
    <location>
        <begin position="1235"/>
        <end position="1260"/>
    </location>
</feature>
<feature type="helix" evidence="36">
    <location>
        <begin position="1264"/>
        <end position="1289"/>
    </location>
</feature>
<feature type="helix" evidence="36">
    <location>
        <begin position="1295"/>
        <end position="1324"/>
    </location>
</feature>
<feature type="helix" evidence="36">
    <location>
        <begin position="1329"/>
        <end position="1353"/>
    </location>
</feature>
<feature type="helix" evidence="43">
    <location>
        <begin position="1360"/>
        <end position="1373"/>
    </location>
</feature>
<feature type="helix" evidence="43">
    <location>
        <begin position="1374"/>
        <end position="1377"/>
    </location>
</feature>
<feature type="strand" evidence="44">
    <location>
        <begin position="1384"/>
        <end position="1386"/>
    </location>
</feature>
<feature type="helix" evidence="43">
    <location>
        <begin position="1389"/>
        <end position="1416"/>
    </location>
</feature>
<feature type="helix" evidence="43">
    <location>
        <begin position="1419"/>
        <end position="1450"/>
    </location>
</feature>
<feature type="helix" evidence="43">
    <location>
        <begin position="1464"/>
        <end position="1480"/>
    </location>
</feature>
<feature type="helix" evidence="43">
    <location>
        <begin position="1488"/>
        <end position="1515"/>
    </location>
</feature>
<feature type="helix" evidence="43">
    <location>
        <begin position="1519"/>
        <end position="1548"/>
    </location>
</feature>
<feature type="helix" evidence="43">
    <location>
        <begin position="1552"/>
        <end position="1576"/>
    </location>
</feature>
<feature type="helix" evidence="43">
    <location>
        <begin position="1579"/>
        <end position="1581"/>
    </location>
</feature>
<feature type="helix" evidence="43">
    <location>
        <begin position="1590"/>
        <end position="1622"/>
    </location>
</feature>
<feature type="helix" evidence="43">
    <location>
        <begin position="1627"/>
        <end position="1653"/>
    </location>
</feature>
<feature type="helix" evidence="44">
    <location>
        <begin position="1658"/>
        <end position="1683"/>
    </location>
</feature>
<feature type="helix" evidence="44">
    <location>
        <begin position="1695"/>
        <end position="1722"/>
    </location>
</feature>
<feature type="helix" evidence="44">
    <location>
        <begin position="1724"/>
        <end position="1751"/>
    </location>
</feature>
<feature type="helix" evidence="44">
    <location>
        <begin position="1755"/>
        <end position="1782"/>
    </location>
</feature>
<feature type="helix" evidence="45">
    <location>
        <begin position="1786"/>
        <end position="1788"/>
    </location>
</feature>
<feature type="helix" evidence="44">
    <location>
        <begin position="1790"/>
        <end position="1818"/>
    </location>
</feature>
<feature type="strand" evidence="35">
    <location>
        <begin position="1822"/>
        <end position="1824"/>
    </location>
</feature>
<feature type="helix" evidence="35">
    <location>
        <begin position="1827"/>
        <end position="1840"/>
    </location>
</feature>
<feature type="helix" evidence="30">
    <location>
        <begin position="1847"/>
        <end position="1874"/>
    </location>
</feature>
<feature type="turn" evidence="30">
    <location>
        <begin position="1875"/>
        <end position="1877"/>
    </location>
</feature>
<feature type="helix" evidence="35">
    <location>
        <begin position="1879"/>
        <end position="1881"/>
    </location>
</feature>
<feature type="helix" evidence="30">
    <location>
        <begin position="1882"/>
        <end position="1904"/>
    </location>
</feature>
<feature type="strand" evidence="35">
    <location>
        <begin position="1907"/>
        <end position="1909"/>
    </location>
</feature>
<feature type="helix" evidence="30">
    <location>
        <begin position="1910"/>
        <end position="1939"/>
    </location>
</feature>
<feature type="helix" evidence="30">
    <location>
        <begin position="1944"/>
        <end position="1968"/>
    </location>
</feature>
<feature type="helix" evidence="30">
    <location>
        <begin position="1969"/>
        <end position="1971"/>
    </location>
</feature>
<feature type="helix" evidence="41">
    <location>
        <begin position="1976"/>
        <end position="2000"/>
    </location>
</feature>
<feature type="helix" evidence="41">
    <location>
        <begin position="2012"/>
        <end position="2014"/>
    </location>
</feature>
<feature type="helix" evidence="41">
    <location>
        <begin position="2016"/>
        <end position="2036"/>
    </location>
</feature>
<feature type="strand" evidence="41">
    <location>
        <begin position="2037"/>
        <end position="2039"/>
    </location>
</feature>
<feature type="helix" evidence="41">
    <location>
        <begin position="2041"/>
        <end position="2068"/>
    </location>
</feature>
<feature type="helix" evidence="41">
    <location>
        <begin position="2074"/>
        <end position="2100"/>
    </location>
</feature>
<feature type="turn" evidence="41">
    <location>
        <begin position="2101"/>
        <end position="2103"/>
    </location>
</feature>
<feature type="helix" evidence="41">
    <location>
        <begin position="2109"/>
        <end position="2161"/>
    </location>
</feature>
<feature type="strand" evidence="41">
    <location>
        <begin position="2162"/>
        <end position="2164"/>
    </location>
</feature>
<feature type="helix" evidence="41">
    <location>
        <begin position="2172"/>
        <end position="2195"/>
    </location>
</feature>
<feature type="helix" evidence="41">
    <location>
        <begin position="2198"/>
        <end position="2223"/>
    </location>
</feature>
<feature type="helix" evidence="41">
    <location>
        <begin position="2230"/>
        <end position="2259"/>
    </location>
</feature>
<feature type="helix" evidence="41">
    <location>
        <begin position="2263"/>
        <end position="2288"/>
    </location>
</feature>
<feature type="helix" evidence="31">
    <location>
        <begin position="2301"/>
        <end position="2324"/>
    </location>
</feature>
<feature type="strand" evidence="31">
    <location>
        <begin position="2332"/>
        <end position="2334"/>
    </location>
</feature>
<feature type="helix" evidence="31">
    <location>
        <begin position="2341"/>
        <end position="2373"/>
    </location>
</feature>
<feature type="helix" evidence="31">
    <location>
        <begin position="2380"/>
        <end position="2382"/>
    </location>
</feature>
<feature type="helix" evidence="31">
    <location>
        <begin position="2383"/>
        <end position="2416"/>
    </location>
</feature>
<feature type="helix" evidence="31">
    <location>
        <begin position="2421"/>
        <end position="2442"/>
    </location>
</feature>
<feature type="turn" evidence="31">
    <location>
        <begin position="2443"/>
        <end position="2445"/>
    </location>
</feature>
<feature type="helix" evidence="31">
    <location>
        <begin position="2451"/>
        <end position="2476"/>
    </location>
</feature>
<feature type="helix" evidence="40">
    <location>
        <begin position="2497"/>
        <end position="2528"/>
    </location>
</feature>
<dbReference type="EMBL" id="X56123">
    <property type="protein sequence ID" value="CAA39588.1"/>
    <property type="molecule type" value="mRNA"/>
</dbReference>
<dbReference type="EMBL" id="AL732506">
    <property type="status" value="NOT_ANNOTATED_CDS"/>
    <property type="molecule type" value="Genomic_DNA"/>
</dbReference>
<dbReference type="EMBL" id="BC018557">
    <property type="protein sequence ID" value="AAH18557.1"/>
    <property type="molecule type" value="mRNA"/>
</dbReference>
<dbReference type="EMBL" id="BC150810">
    <property type="protein sequence ID" value="AAI50811.1"/>
    <property type="molecule type" value="mRNA"/>
</dbReference>
<dbReference type="CCDS" id="CCDS18101.1"/>
<dbReference type="PIR" id="S11661">
    <property type="entry name" value="S11661"/>
</dbReference>
<dbReference type="RefSeq" id="NP_035732.2">
    <property type="nucleotide sequence ID" value="NM_011602.5"/>
</dbReference>
<dbReference type="RefSeq" id="XP_006537832.2">
    <property type="nucleotide sequence ID" value="XM_006537769.3"/>
</dbReference>
<dbReference type="PDB" id="1SJ7">
    <property type="method" value="X-ray"/>
    <property type="resolution" value="2.50 A"/>
    <property type="chains" value="A/B/C=482-655"/>
</dbReference>
<dbReference type="PDB" id="1SJ8">
    <property type="method" value="X-ray"/>
    <property type="resolution" value="2.60 A"/>
    <property type="chains" value="A=482-789"/>
</dbReference>
<dbReference type="PDB" id="1T01">
    <property type="method" value="X-ray"/>
    <property type="resolution" value="2.06 A"/>
    <property type="chains" value="B=605-628"/>
</dbReference>
<dbReference type="PDB" id="1U89">
    <property type="method" value="NMR"/>
    <property type="chains" value="A=755-889"/>
</dbReference>
<dbReference type="PDB" id="1Y19">
    <property type="method" value="X-ray"/>
    <property type="resolution" value="2.60 A"/>
    <property type="chains" value="B/D/F/H/J/L=209-410"/>
</dbReference>
<dbReference type="PDB" id="1ZW3">
    <property type="method" value="X-ray"/>
    <property type="resolution" value="3.30 A"/>
    <property type="chains" value="B=1628-1652"/>
</dbReference>
<dbReference type="PDB" id="2B0H">
    <property type="method" value="NMR"/>
    <property type="chains" value="A=1843-1973"/>
</dbReference>
<dbReference type="PDB" id="2G35">
    <property type="method" value="NMR"/>
    <property type="chains" value="A=305-404"/>
</dbReference>
<dbReference type="PDB" id="2JSW">
    <property type="method" value="NMR"/>
    <property type="chains" value="A=2300-2482"/>
</dbReference>
<dbReference type="PDB" id="2KBB">
    <property type="method" value="NMR"/>
    <property type="chains" value="A=1655-1822"/>
</dbReference>
<dbReference type="PDB" id="2KC1">
    <property type="method" value="NMR"/>
    <property type="chains" value="A=1-85"/>
</dbReference>
<dbReference type="PDB" id="2KC2">
    <property type="method" value="NMR"/>
    <property type="chains" value="A=86-202"/>
</dbReference>
<dbReference type="PDB" id="2KGX">
    <property type="method" value="NMR"/>
    <property type="chains" value="A=1655-1822, B=311-401"/>
</dbReference>
<dbReference type="PDB" id="2KMA">
    <property type="method" value="NMR"/>
    <property type="chains" value="A=1-202"/>
</dbReference>
<dbReference type="PDB" id="2KVP">
    <property type="method" value="NMR"/>
    <property type="chains" value="A=1815-1973"/>
</dbReference>
<dbReference type="PDB" id="2L10">
    <property type="method" value="NMR"/>
    <property type="chains" value="A=1206-1357"/>
</dbReference>
<dbReference type="PDB" id="2L7A">
    <property type="method" value="NMR"/>
    <property type="chains" value="A=787-911"/>
</dbReference>
<dbReference type="PDB" id="2L7N">
    <property type="method" value="NMR"/>
    <property type="chains" value="A=1046-1207"/>
</dbReference>
<dbReference type="PDB" id="2LQG">
    <property type="method" value="NMR"/>
    <property type="chains" value="A=913-1044"/>
</dbReference>
<dbReference type="PDB" id="2QDQ">
    <property type="method" value="X-ray"/>
    <property type="resolution" value="2.20 A"/>
    <property type="chains" value="A/B=2494-2541"/>
</dbReference>
<dbReference type="PDB" id="2X0C">
    <property type="method" value="X-ray"/>
    <property type="resolution" value="2.00 A"/>
    <property type="chains" value="A=1359-1659"/>
</dbReference>
<dbReference type="PDB" id="3DYJ">
    <property type="method" value="X-ray"/>
    <property type="resolution" value="1.85 A"/>
    <property type="chains" value="A/B=1974-2293"/>
</dbReference>
<dbReference type="PDB" id="3IVF">
    <property type="method" value="X-ray"/>
    <property type="resolution" value="1.94 A"/>
    <property type="chains" value="A=1-400"/>
</dbReference>
<dbReference type="PDB" id="3S90">
    <property type="method" value="X-ray"/>
    <property type="resolution" value="1.97 A"/>
    <property type="chains" value="C/D=1512-1546"/>
</dbReference>
<dbReference type="PDB" id="4F7G">
    <property type="method" value="X-ray"/>
    <property type="resolution" value="2.05 A"/>
    <property type="chains" value="A=206-405, B=1654-1847"/>
</dbReference>
<dbReference type="PDB" id="4W8P">
    <property type="method" value="X-ray"/>
    <property type="resolution" value="1.50 A"/>
    <property type="chains" value="A=1357-1657"/>
</dbReference>
<dbReference type="PDB" id="5FZT">
    <property type="method" value="X-ray"/>
    <property type="resolution" value="2.10 A"/>
    <property type="chains" value="A=1359-1659"/>
</dbReference>
<dbReference type="PDB" id="5IC0">
    <property type="method" value="X-ray"/>
    <property type="resolution" value="1.97 A"/>
    <property type="chains" value="A=1357-1822"/>
</dbReference>
<dbReference type="PDB" id="5IC1">
    <property type="method" value="X-ray"/>
    <property type="resolution" value="2.20 A"/>
    <property type="chains" value="A=1357-1822"/>
</dbReference>
<dbReference type="PDB" id="5NL1">
    <property type="method" value="X-ray"/>
    <property type="resolution" value="2.50 A"/>
    <property type="chains" value="A/B/C/D/E/F=480-635"/>
</dbReference>
<dbReference type="PDB" id="6BA6">
    <property type="method" value="NMR"/>
    <property type="chains" value="A=1-86"/>
</dbReference>
<dbReference type="PDB" id="6MFS">
    <property type="method" value="X-ray"/>
    <property type="resolution" value="2.85 A"/>
    <property type="chains" value="A=1-136, A=169-400"/>
</dbReference>
<dbReference type="PDB" id="6TWN">
    <property type="method" value="X-ray"/>
    <property type="resolution" value="2.28 A"/>
    <property type="chains" value="A/B=1359-1659"/>
</dbReference>
<dbReference type="PDB" id="6VGU">
    <property type="method" value="X-ray"/>
    <property type="resolution" value="2.78 A"/>
    <property type="chains" value="A=1-430"/>
</dbReference>
<dbReference type="PDB" id="7V1A">
    <property type="method" value="X-ray"/>
    <property type="resolution" value="1.84 A"/>
    <property type="chains" value="A=1357-1657"/>
</dbReference>
<dbReference type="PDB" id="7ZW4">
    <property type="method" value="X-ray"/>
    <property type="resolution" value="2.72 A"/>
    <property type="chains" value="A=1358-1659"/>
</dbReference>
<dbReference type="PDB" id="8AS9">
    <property type="method" value="X-ray"/>
    <property type="resolution" value="3.40 A"/>
    <property type="chains" value="C=1359-1659"/>
</dbReference>
<dbReference type="PDB" id="8FSE">
    <property type="method" value="X-ray"/>
    <property type="resolution" value="1.90 A"/>
    <property type="chains" value="A/B=1-430"/>
</dbReference>
<dbReference type="PDB" id="8FSO">
    <property type="method" value="X-ray"/>
    <property type="resolution" value="2.33 A"/>
    <property type="chains" value="A=1-430"/>
</dbReference>
<dbReference type="PDB" id="8FTB">
    <property type="method" value="X-ray"/>
    <property type="resolution" value="1.97 A"/>
    <property type="chains" value="B=1-430"/>
</dbReference>
<dbReference type="PDB" id="8IVZ">
    <property type="method" value="X-ray"/>
    <property type="resolution" value="2.80 A"/>
    <property type="chains" value="A/B=1357-1653"/>
</dbReference>
<dbReference type="PDB" id="8T0A">
    <property type="method" value="X-ray"/>
    <property type="resolution" value="2.14 A"/>
    <property type="chains" value="A=1-430"/>
</dbReference>
<dbReference type="PDB" id="8T0D">
    <property type="method" value="X-ray"/>
    <property type="resolution" value="2.77 A"/>
    <property type="chains" value="A=1-430"/>
</dbReference>
<dbReference type="PDB" id="8VDO">
    <property type="method" value="EM"/>
    <property type="resolution" value="2.70 A"/>
    <property type="chains" value="A=1-2541"/>
</dbReference>
<dbReference type="PDB" id="8VDP">
    <property type="method" value="EM"/>
    <property type="resolution" value="3.40 A"/>
    <property type="chains" value="A=1-2541"/>
</dbReference>
<dbReference type="PDB" id="8VDQ">
    <property type="method" value="EM"/>
    <property type="resolution" value="5.50 A"/>
    <property type="chains" value="A=1-2541"/>
</dbReference>
<dbReference type="PDB" id="8VDR">
    <property type="method" value="EM"/>
    <property type="resolution" value="3.70 A"/>
    <property type="chains" value="A=1-2541"/>
</dbReference>
<dbReference type="PDB" id="9AZ6">
    <property type="method" value="EM"/>
    <property type="resolution" value="2.98 A"/>
    <property type="chains" value="F/G/H/I/J/K/L/M=2301-2541"/>
</dbReference>
<dbReference type="PDBsum" id="1SJ7"/>
<dbReference type="PDBsum" id="1SJ8"/>
<dbReference type="PDBsum" id="1T01"/>
<dbReference type="PDBsum" id="1U89"/>
<dbReference type="PDBsum" id="1Y19"/>
<dbReference type="PDBsum" id="1ZW3"/>
<dbReference type="PDBsum" id="2B0H"/>
<dbReference type="PDBsum" id="2G35"/>
<dbReference type="PDBsum" id="2JSW"/>
<dbReference type="PDBsum" id="2KBB"/>
<dbReference type="PDBsum" id="2KC1"/>
<dbReference type="PDBsum" id="2KC2"/>
<dbReference type="PDBsum" id="2KGX"/>
<dbReference type="PDBsum" id="2KMA"/>
<dbReference type="PDBsum" id="2KVP"/>
<dbReference type="PDBsum" id="2L10"/>
<dbReference type="PDBsum" id="2L7A"/>
<dbReference type="PDBsum" id="2L7N"/>
<dbReference type="PDBsum" id="2LQG"/>
<dbReference type="PDBsum" id="2QDQ"/>
<dbReference type="PDBsum" id="2X0C"/>
<dbReference type="PDBsum" id="3DYJ"/>
<dbReference type="PDBsum" id="3IVF"/>
<dbReference type="PDBsum" id="3S90"/>
<dbReference type="PDBsum" id="4F7G"/>
<dbReference type="PDBsum" id="4W8P"/>
<dbReference type="PDBsum" id="5FZT"/>
<dbReference type="PDBsum" id="5IC0"/>
<dbReference type="PDBsum" id="5IC1"/>
<dbReference type="PDBsum" id="5NL1"/>
<dbReference type="PDBsum" id="6BA6"/>
<dbReference type="PDBsum" id="6MFS"/>
<dbReference type="PDBsum" id="6TWN"/>
<dbReference type="PDBsum" id="6VGU"/>
<dbReference type="PDBsum" id="7V1A"/>
<dbReference type="PDBsum" id="7ZW4"/>
<dbReference type="PDBsum" id="8AS9"/>
<dbReference type="PDBsum" id="8FSE"/>
<dbReference type="PDBsum" id="8FSO"/>
<dbReference type="PDBsum" id="8FTB"/>
<dbReference type="PDBsum" id="8IVZ"/>
<dbReference type="PDBsum" id="8T0A"/>
<dbReference type="PDBsum" id="8T0D"/>
<dbReference type="PDBsum" id="8VDO"/>
<dbReference type="PDBsum" id="8VDP"/>
<dbReference type="PDBsum" id="8VDQ"/>
<dbReference type="PDBsum" id="8VDR"/>
<dbReference type="PDBsum" id="9AZ6"/>
<dbReference type="BMRB" id="P26039"/>
<dbReference type="EMDB" id="EMD-43152"/>
<dbReference type="EMDB" id="EMD-43154"/>
<dbReference type="EMDB" id="EMD-43155"/>
<dbReference type="EMDB" id="EMD-43156"/>
<dbReference type="EMDB" id="EMD-44013"/>
<dbReference type="EMDB" id="EMD-44931"/>
<dbReference type="EMDB" id="EMD-48238"/>
<dbReference type="EMDB" id="EMD-48243"/>
<dbReference type="SMR" id="P26039"/>
<dbReference type="BioGRID" id="204222">
    <property type="interactions" value="31"/>
</dbReference>
<dbReference type="DIP" id="DIP-647N"/>
<dbReference type="FunCoup" id="P26039">
    <property type="interactions" value="1311"/>
</dbReference>
<dbReference type="IntAct" id="P26039">
    <property type="interactions" value="18"/>
</dbReference>
<dbReference type="MINT" id="P26039"/>
<dbReference type="STRING" id="10090.ENSMUSP00000030187"/>
<dbReference type="GlyGen" id="P26039">
    <property type="glycosylation" value="3 sites, 1 O-linked glycan (3 sites)"/>
</dbReference>
<dbReference type="iPTMnet" id="P26039"/>
<dbReference type="MetOSite" id="P26039"/>
<dbReference type="PhosphoSitePlus" id="P26039"/>
<dbReference type="SwissPalm" id="P26039"/>
<dbReference type="CPTAC" id="non-CPTAC-3676"/>
<dbReference type="jPOST" id="P26039"/>
<dbReference type="PaxDb" id="10090-ENSMUSP00000030187"/>
<dbReference type="PeptideAtlas" id="P26039"/>
<dbReference type="ProteomicsDB" id="259514"/>
<dbReference type="Pumba" id="P26039"/>
<dbReference type="Antibodypedia" id="1497">
    <property type="antibodies" value="706 antibodies from 42 providers"/>
</dbReference>
<dbReference type="DNASU" id="21894"/>
<dbReference type="Ensembl" id="ENSMUST00000030187.14">
    <property type="protein sequence ID" value="ENSMUSP00000030187.8"/>
    <property type="gene ID" value="ENSMUSG00000028465.17"/>
</dbReference>
<dbReference type="GeneID" id="21894"/>
<dbReference type="KEGG" id="mmu:21894"/>
<dbReference type="UCSC" id="uc008sqe.2">
    <property type="organism name" value="mouse"/>
</dbReference>
<dbReference type="AGR" id="MGI:1099832"/>
<dbReference type="CTD" id="7094"/>
<dbReference type="MGI" id="MGI:1099832">
    <property type="gene designation" value="Tln1"/>
</dbReference>
<dbReference type="VEuPathDB" id="HostDB:ENSMUSG00000028465"/>
<dbReference type="eggNOG" id="KOG4261">
    <property type="taxonomic scope" value="Eukaryota"/>
</dbReference>
<dbReference type="GeneTree" id="ENSGT00940000157006"/>
<dbReference type="HOGENOM" id="CLU_000364_1_1_1"/>
<dbReference type="InParanoid" id="P26039"/>
<dbReference type="OMA" id="VDMTQHY"/>
<dbReference type="OrthoDB" id="10262320at2759"/>
<dbReference type="PhylomeDB" id="P26039"/>
<dbReference type="TreeFam" id="TF314677"/>
<dbReference type="Reactome" id="R-MMU-114608">
    <property type="pathway name" value="Platelet degranulation"/>
</dbReference>
<dbReference type="Reactome" id="R-MMU-354192">
    <property type="pathway name" value="Integrin signaling"/>
</dbReference>
<dbReference type="Reactome" id="R-MMU-354194">
    <property type="pathway name" value="GRB2:SOS provides linkage to MAPK signaling for Integrins"/>
</dbReference>
<dbReference type="Reactome" id="R-MMU-372708">
    <property type="pathway name" value="p130Cas linkage to MAPK signaling for integrins"/>
</dbReference>
<dbReference type="Reactome" id="R-MMU-399955">
    <property type="pathway name" value="SEMA3A-Plexin repulsion signaling by inhibiting Integrin adhesion"/>
</dbReference>
<dbReference type="Reactome" id="R-MMU-445355">
    <property type="pathway name" value="Smooth Muscle Contraction"/>
</dbReference>
<dbReference type="Reactome" id="R-MMU-5674135">
    <property type="pathway name" value="MAP2K and MAPK activation"/>
</dbReference>
<dbReference type="BioGRID-ORCS" id="21894">
    <property type="hits" value="12 hits in 77 CRISPR screens"/>
</dbReference>
<dbReference type="ChiTaRS" id="Tln1">
    <property type="organism name" value="mouse"/>
</dbReference>
<dbReference type="EvolutionaryTrace" id="P26039"/>
<dbReference type="PRO" id="PR:P26039"/>
<dbReference type="Proteomes" id="UP000000589">
    <property type="component" value="Chromosome 4"/>
</dbReference>
<dbReference type="RNAct" id="P26039">
    <property type="molecule type" value="protein"/>
</dbReference>
<dbReference type="Bgee" id="ENSMUSG00000028465">
    <property type="expression patterns" value="Expressed in granulocyte and 270 other cell types or tissues"/>
</dbReference>
<dbReference type="ExpressionAtlas" id="P26039">
    <property type="expression patterns" value="baseline and differential"/>
</dbReference>
<dbReference type="GO" id="GO:0005912">
    <property type="term" value="C:adherens junction"/>
    <property type="evidence" value="ECO:0007669"/>
    <property type="project" value="Ensembl"/>
</dbReference>
<dbReference type="GO" id="GO:0009986">
    <property type="term" value="C:cell surface"/>
    <property type="evidence" value="ECO:0007669"/>
    <property type="project" value="UniProtKB-SubCell"/>
</dbReference>
<dbReference type="GO" id="GO:0005856">
    <property type="term" value="C:cytoskeleton"/>
    <property type="evidence" value="ECO:0007669"/>
    <property type="project" value="UniProtKB-SubCell"/>
</dbReference>
<dbReference type="GO" id="GO:0005829">
    <property type="term" value="C:cytosol"/>
    <property type="evidence" value="ECO:0000304"/>
    <property type="project" value="Reactome"/>
</dbReference>
<dbReference type="GO" id="GO:0005925">
    <property type="term" value="C:focal adhesion"/>
    <property type="evidence" value="ECO:0000314"/>
    <property type="project" value="UniProtKB"/>
</dbReference>
<dbReference type="GO" id="GO:0001726">
    <property type="term" value="C:ruffle"/>
    <property type="evidence" value="ECO:0000250"/>
    <property type="project" value="HGNC-UCL"/>
</dbReference>
<dbReference type="GO" id="GO:0032587">
    <property type="term" value="C:ruffle membrane"/>
    <property type="evidence" value="ECO:0007669"/>
    <property type="project" value="UniProtKB-SubCell"/>
</dbReference>
<dbReference type="GO" id="GO:0051015">
    <property type="term" value="F:actin filament binding"/>
    <property type="evidence" value="ECO:0007669"/>
    <property type="project" value="InterPro"/>
</dbReference>
<dbReference type="GO" id="GO:0005178">
    <property type="term" value="F:integrin binding"/>
    <property type="evidence" value="ECO:0000315"/>
    <property type="project" value="CAFA"/>
</dbReference>
<dbReference type="GO" id="GO:0030274">
    <property type="term" value="F:LIM domain binding"/>
    <property type="evidence" value="ECO:0007669"/>
    <property type="project" value="Ensembl"/>
</dbReference>
<dbReference type="GO" id="GO:0035091">
    <property type="term" value="F:phosphatidylinositol binding"/>
    <property type="evidence" value="ECO:0000315"/>
    <property type="project" value="CAFA"/>
</dbReference>
<dbReference type="GO" id="GO:0001786">
    <property type="term" value="F:phosphatidylserine binding"/>
    <property type="evidence" value="ECO:0000315"/>
    <property type="project" value="CAFA"/>
</dbReference>
<dbReference type="GO" id="GO:0005200">
    <property type="term" value="F:structural constituent of cytoskeleton"/>
    <property type="evidence" value="ECO:0007669"/>
    <property type="project" value="InterPro"/>
</dbReference>
<dbReference type="GO" id="GO:0017166">
    <property type="term" value="F:vinculin binding"/>
    <property type="evidence" value="ECO:0007669"/>
    <property type="project" value="Ensembl"/>
</dbReference>
<dbReference type="GO" id="GO:0007155">
    <property type="term" value="P:cell adhesion"/>
    <property type="evidence" value="ECO:0007669"/>
    <property type="project" value="InterPro"/>
</dbReference>
<dbReference type="GO" id="GO:0007044">
    <property type="term" value="P:cell-substrate junction assembly"/>
    <property type="evidence" value="ECO:0000315"/>
    <property type="project" value="MGI"/>
</dbReference>
<dbReference type="GO" id="GO:0030866">
    <property type="term" value="P:cortical actin cytoskeleton organization"/>
    <property type="evidence" value="ECO:0000315"/>
    <property type="project" value="MGI"/>
</dbReference>
<dbReference type="GO" id="GO:0043622">
    <property type="term" value="P:cortical microtubule organization"/>
    <property type="evidence" value="ECO:0000315"/>
    <property type="project" value="UniProtKB"/>
</dbReference>
<dbReference type="GO" id="GO:0033622">
    <property type="term" value="P:integrin activation"/>
    <property type="evidence" value="ECO:0000315"/>
    <property type="project" value="CAFA"/>
</dbReference>
<dbReference type="GO" id="GO:0007229">
    <property type="term" value="P:integrin-mediated signaling pathway"/>
    <property type="evidence" value="ECO:0000315"/>
    <property type="project" value="CAFA"/>
</dbReference>
<dbReference type="CDD" id="cd14473">
    <property type="entry name" value="FERM_B-lobe"/>
    <property type="match status" value="1"/>
</dbReference>
<dbReference type="CDD" id="cd10569">
    <property type="entry name" value="FERM_C_Talin"/>
    <property type="match status" value="1"/>
</dbReference>
<dbReference type="CDD" id="cd17171">
    <property type="entry name" value="FERM_F0_TLN1"/>
    <property type="match status" value="1"/>
</dbReference>
<dbReference type="CDD" id="cd17173">
    <property type="entry name" value="FERM_F1_TLN1"/>
    <property type="match status" value="1"/>
</dbReference>
<dbReference type="CDD" id="cd12150">
    <property type="entry name" value="talin-RS"/>
    <property type="match status" value="1"/>
</dbReference>
<dbReference type="DisProt" id="DP00653"/>
<dbReference type="FunFam" id="1.20.120.230:FF:000005">
    <property type="entry name" value="Talin 1"/>
    <property type="match status" value="1"/>
</dbReference>
<dbReference type="FunFam" id="3.10.20.90:FF:000066">
    <property type="entry name" value="Talin 1"/>
    <property type="match status" value="1"/>
</dbReference>
<dbReference type="FunFam" id="1.20.120.230:FF:000002">
    <property type="entry name" value="Talin 2"/>
    <property type="match status" value="1"/>
</dbReference>
<dbReference type="FunFam" id="1.20.120.230:FF:000003">
    <property type="entry name" value="Talin 2"/>
    <property type="match status" value="1"/>
</dbReference>
<dbReference type="FunFam" id="1.20.120.230:FF:000004">
    <property type="entry name" value="Talin 2"/>
    <property type="match status" value="1"/>
</dbReference>
<dbReference type="FunFam" id="1.20.120.230:FF:000009">
    <property type="entry name" value="Talin 2"/>
    <property type="match status" value="1"/>
</dbReference>
<dbReference type="FunFam" id="1.20.1410.10:FF:000001">
    <property type="entry name" value="Talin 2"/>
    <property type="match status" value="1"/>
</dbReference>
<dbReference type="FunFam" id="1.20.1420.10:FF:000001">
    <property type="entry name" value="Talin 2"/>
    <property type="match status" value="1"/>
</dbReference>
<dbReference type="FunFam" id="1.20.1420.10:FF:000002">
    <property type="entry name" value="Talin 2"/>
    <property type="match status" value="1"/>
</dbReference>
<dbReference type="FunFam" id="1.20.1420.10:FF:000004">
    <property type="entry name" value="Talin 2"/>
    <property type="match status" value="1"/>
</dbReference>
<dbReference type="FunFam" id="1.20.1420.10:FF:000005">
    <property type="entry name" value="Talin 2"/>
    <property type="match status" value="1"/>
</dbReference>
<dbReference type="FunFam" id="1.20.1420.10:FF:000006">
    <property type="entry name" value="Talin 2"/>
    <property type="match status" value="1"/>
</dbReference>
<dbReference type="FunFam" id="1.20.1420.10:FF:000007">
    <property type="entry name" value="Talin 2"/>
    <property type="match status" value="1"/>
</dbReference>
<dbReference type="FunFam" id="1.20.80.10:FF:000007">
    <property type="entry name" value="Talin 2"/>
    <property type="match status" value="1"/>
</dbReference>
<dbReference type="FunFam" id="2.30.29.30:FF:000028">
    <property type="entry name" value="Talin 2"/>
    <property type="match status" value="1"/>
</dbReference>
<dbReference type="FunFam" id="3.10.20.90:FF:000028">
    <property type="entry name" value="Talin 2"/>
    <property type="match status" value="1"/>
</dbReference>
<dbReference type="Gene3D" id="1.20.80.10">
    <property type="match status" value="1"/>
</dbReference>
<dbReference type="Gene3D" id="1.20.120.230">
    <property type="entry name" value="Alpha-catenin/vinculin-like"/>
    <property type="match status" value="5"/>
</dbReference>
<dbReference type="Gene3D" id="1.20.1410.10">
    <property type="entry name" value="I/LWEQ domain"/>
    <property type="match status" value="1"/>
</dbReference>
<dbReference type="Gene3D" id="3.10.20.90">
    <property type="entry name" value="Phosphatidylinositol 3-kinase Catalytic Subunit, Chain A, domain 1"/>
    <property type="match status" value="3"/>
</dbReference>
<dbReference type="Gene3D" id="2.30.29.30">
    <property type="entry name" value="Pleckstrin-homology domain (PH domain)/Phosphotyrosine-binding domain (PTB)"/>
    <property type="match status" value="1"/>
</dbReference>
<dbReference type="Gene3D" id="1.20.1420.10">
    <property type="entry name" value="Talin, central domain"/>
    <property type="match status" value="7"/>
</dbReference>
<dbReference type="IDEAL" id="IID50205"/>
<dbReference type="InterPro" id="IPR036723">
    <property type="entry name" value="Alpha-catenin/vinculin-like_sf"/>
</dbReference>
<dbReference type="InterPro" id="IPR019749">
    <property type="entry name" value="Band_41_domain"/>
</dbReference>
<dbReference type="InterPro" id="IPR014352">
    <property type="entry name" value="FERM/acyl-CoA-bd_prot_sf"/>
</dbReference>
<dbReference type="InterPro" id="IPR035963">
    <property type="entry name" value="FERM_2"/>
</dbReference>
<dbReference type="InterPro" id="IPR019748">
    <property type="entry name" value="FERM_central"/>
</dbReference>
<dbReference type="InterPro" id="IPR019747">
    <property type="entry name" value="FERM_CS"/>
</dbReference>
<dbReference type="InterPro" id="IPR000299">
    <property type="entry name" value="FERM_domain"/>
</dbReference>
<dbReference type="InterPro" id="IPR032425">
    <property type="entry name" value="FERM_f0"/>
</dbReference>
<dbReference type="InterPro" id="IPR035964">
    <property type="entry name" value="I/LWEQ_dom_sf"/>
</dbReference>
<dbReference type="InterPro" id="IPR002558">
    <property type="entry name" value="ILWEQ_dom"/>
</dbReference>
<dbReference type="InterPro" id="IPR002404">
    <property type="entry name" value="IRS_PTB"/>
</dbReference>
<dbReference type="InterPro" id="IPR011993">
    <property type="entry name" value="PH-like_dom_sf"/>
</dbReference>
<dbReference type="InterPro" id="IPR037438">
    <property type="entry name" value="Talin1/2-RS"/>
</dbReference>
<dbReference type="InterPro" id="IPR015224">
    <property type="entry name" value="Talin_cent"/>
</dbReference>
<dbReference type="InterPro" id="IPR036476">
    <property type="entry name" value="Talin_cent_sf"/>
</dbReference>
<dbReference type="InterPro" id="IPR054082">
    <property type="entry name" value="Talin_IBS2B"/>
</dbReference>
<dbReference type="InterPro" id="IPR049108">
    <property type="entry name" value="Talin_R4"/>
</dbReference>
<dbReference type="InterPro" id="IPR054060">
    <property type="entry name" value="TLN1-like_RS"/>
</dbReference>
<dbReference type="InterPro" id="IPR029071">
    <property type="entry name" value="Ubiquitin-like_domsf"/>
</dbReference>
<dbReference type="InterPro" id="IPR015009">
    <property type="entry name" value="Vinculin-bd_dom"/>
</dbReference>
<dbReference type="PANTHER" id="PTHR19981">
    <property type="entry name" value="TALIN"/>
    <property type="match status" value="1"/>
</dbReference>
<dbReference type="PANTHER" id="PTHR19981:SF7">
    <property type="entry name" value="TALIN-1"/>
    <property type="match status" value="1"/>
</dbReference>
<dbReference type="Pfam" id="PF16511">
    <property type="entry name" value="FERM_f0"/>
    <property type="match status" value="1"/>
</dbReference>
<dbReference type="Pfam" id="PF00373">
    <property type="entry name" value="FERM_M"/>
    <property type="match status" value="1"/>
</dbReference>
<dbReference type="Pfam" id="PF01608">
    <property type="entry name" value="I_LWEQ"/>
    <property type="match status" value="1"/>
</dbReference>
<dbReference type="Pfam" id="PF02174">
    <property type="entry name" value="IRS"/>
    <property type="match status" value="1"/>
</dbReference>
<dbReference type="Pfam" id="PF21896">
    <property type="entry name" value="Talin_IBS2B"/>
    <property type="match status" value="3"/>
</dbReference>
<dbReference type="Pfam" id="PF09141">
    <property type="entry name" value="Talin_middle"/>
    <property type="match status" value="1"/>
</dbReference>
<dbReference type="Pfam" id="PF21692">
    <property type="entry name" value="Talin_R4"/>
    <property type="match status" value="1"/>
</dbReference>
<dbReference type="Pfam" id="PF25177">
    <property type="entry name" value="Talin_VBS2"/>
    <property type="match status" value="1"/>
</dbReference>
<dbReference type="Pfam" id="PF21865">
    <property type="entry name" value="TLN1-like_RS"/>
    <property type="match status" value="3"/>
</dbReference>
<dbReference type="Pfam" id="PF08913">
    <property type="entry name" value="VBS"/>
    <property type="match status" value="1"/>
</dbReference>
<dbReference type="SMART" id="SM00295">
    <property type="entry name" value="B41"/>
    <property type="match status" value="1"/>
</dbReference>
<dbReference type="SMART" id="SM00307">
    <property type="entry name" value="ILWEQ"/>
    <property type="match status" value="1"/>
</dbReference>
<dbReference type="SMART" id="SM01244">
    <property type="entry name" value="IRS"/>
    <property type="match status" value="1"/>
</dbReference>
<dbReference type="SUPFAM" id="SSF109880">
    <property type="entry name" value="A middle domain of Talin 1"/>
    <property type="match status" value="1"/>
</dbReference>
<dbReference type="SUPFAM" id="SSF47220">
    <property type="entry name" value="alpha-catenin/vinculin-like"/>
    <property type="match status" value="5"/>
</dbReference>
<dbReference type="SUPFAM" id="SSF109885">
    <property type="entry name" value="I/LWEQ domain"/>
    <property type="match status" value="4"/>
</dbReference>
<dbReference type="SUPFAM" id="SSF50729">
    <property type="entry name" value="PH domain-like"/>
    <property type="match status" value="1"/>
</dbReference>
<dbReference type="SUPFAM" id="SSF47031">
    <property type="entry name" value="Second domain of FERM"/>
    <property type="match status" value="1"/>
</dbReference>
<dbReference type="SUPFAM" id="SSF54236">
    <property type="entry name" value="Ubiquitin-like"/>
    <property type="match status" value="1"/>
</dbReference>
<dbReference type="PROSITE" id="PS00660">
    <property type="entry name" value="FERM_1"/>
    <property type="match status" value="1"/>
</dbReference>
<dbReference type="PROSITE" id="PS00661">
    <property type="entry name" value="FERM_2"/>
    <property type="match status" value="1"/>
</dbReference>
<dbReference type="PROSITE" id="PS50057">
    <property type="entry name" value="FERM_3"/>
    <property type="match status" value="1"/>
</dbReference>
<dbReference type="PROSITE" id="PS50945">
    <property type="entry name" value="I_LWEQ"/>
    <property type="match status" value="1"/>
</dbReference>
<comment type="function">
    <text evidence="12">High molecular weight cytoskeletal protein concentrated at regions of cell-matrix and cell-cell contacts. Involved in connections of major cytoskeletal structures to the plasma membrane. With KANK1 co-organize the assembly of cortical microtubule stabilizing complexes (CMSCs) positioned to control microtubule-actin crosstalk at focal adhesions (FAs) rims.</text>
</comment>
<comment type="subunit">
    <text evidence="2 3 6 7 8 9 11 12 13 14">Part of a complex composed of THSD1, PTK2/FAK1, TLN1 and VCL (By similarity). Interacts with THSD1; this promotes interaction with PTK2/FAK1 and VCL (By similarity). Interacts with NRAP and LAYN (By similarity). Interacts with SYNM (By similarity). Interacts with ITGB1; the interaction is prevented by competitive binding of ITGB1BP1 (By similarity). Binds with high affinity to VCL and with low affinity to integrins (PubMed:15272303, PubMed:15642262, PubMed:20610383, PubMed:23389036). Interacts with APBB1IP; this inhibits VCL binding (PubMed:23389036). Interacts with PTK2/FAK1 (PubMed:7622520). Interacts with PIP5K1C (PubMed:15623515). Interacts with F-actin (PubMed:20610383). Interacts with SVEP1 (PubMed:36792666). Interacts (via R7 domain) with KANK1 or KANK2 (via KN motif); this interaction likely initiates the assembly of cortical microtubule stabilization complexes (CMSCs) at the vicinity of focal adhesions.</text>
</comment>
<comment type="interaction">
    <interactant intactId="EBI-1039593">
        <id>P26039</id>
    </interactant>
    <interactant intactId="EBI-7450496">
        <id>Q8R5A3</id>
        <label>Apbb1ip</label>
    </interactant>
    <organismsDiffer>false</organismsDiffer>
    <experiments>8</experiments>
</comment>
<comment type="interaction">
    <interactant intactId="EBI-1039593">
        <id>P26039</id>
    </interactant>
    <interactant intactId="EBI-432047">
        <id>Q64727</id>
        <label>Vcl</label>
    </interactant>
    <organismsDiffer>false</organismsDiffer>
    <experiments>2</experiments>
</comment>
<comment type="interaction">
    <interactant intactId="EBI-1039593">
        <id>P26039</id>
    </interactant>
    <interactant intactId="EBI-703066">
        <id>P05556</id>
        <label>ITGB1</label>
    </interactant>
    <organismsDiffer>true</organismsDiffer>
    <experiments>2</experiments>
</comment>
<comment type="interaction">
    <interactant intactId="EBI-1039593">
        <id>P26039</id>
    </interactant>
    <interactant intactId="EBI-702847">
        <id>P05106</id>
        <label>ITGB3</label>
    </interactant>
    <organismsDiffer>true</organismsDiffer>
    <experiments>7</experiments>
</comment>
<comment type="interaction">
    <interactant intactId="EBI-1039593">
        <id>P26039</id>
    </interactant>
    <interactant intactId="EBI-1039563">
        <id>P12003</id>
        <label>VCL</label>
    </interactant>
    <organismsDiffer>true</organismsDiffer>
    <experiments>5</experiments>
</comment>
<comment type="subcellular location">
    <subcellularLocation>
        <location evidence="1">Cell projection</location>
        <location evidence="1">Ruffle membrane</location>
        <topology evidence="1">Peripheral membrane protein</topology>
        <orientation evidence="1">Cytoplasmic side</orientation>
    </subcellularLocation>
    <subcellularLocation>
        <location evidence="1">Cytoplasm</location>
        <location evidence="1">Cytoskeleton</location>
    </subcellularLocation>
    <subcellularLocation>
        <location evidence="10">Cell surface</location>
    </subcellularLocation>
    <subcellularLocation>
        <location evidence="10 12">Cell junction</location>
        <location evidence="10 12">Focal adhesion</location>
    </subcellularLocation>
    <text evidence="1">Colocalizes with LAYN at the membrane ruffles (By similarity). Localized preferentially in focal adhesions than fibrillar adhesions.</text>
</comment>
<comment type="domain">
    <text evidence="16 17">Consists of an N-terminal FERM domain linked via a short unstructured region to a large flexible C-terminal rod which contains 13 amphipathic helical bundles (R1-R13). The rod begins with a five-helix bundle (R1) followed by three four-helix bundles (R2-R4). These are followed by a series of eight five-helix bundles (R5-R7 and R9-R13) in which the N- and C-termini are positioned at opposite ends of the bundle, creating a linear chain. The four-helix bundle R8 does not disrupt the chain because it is inserted into a loop in the R7 five-helix bundle. The uneven distribution of four- and five-helix bundles creates two distinctly different zones: a compact N-terminal region sensitive to stretch and a linear C-terminal region that is optimal for force transmission.</text>
</comment>